<protein>
    <recommendedName>
        <fullName evidence="1">Large ribosomal subunit protein uL4</fullName>
    </recommendedName>
    <alternativeName>
        <fullName evidence="3">50S ribosomal protein L4</fullName>
    </alternativeName>
</protein>
<sequence length="207" mass="22553">MDLNIKSLAGQEAGSLGVAEGVFAADYNEALIHQVVVAYMAGARQGTKAQKTRSEVSGGGAKPWRQKGTGRARAGTIRSPIFRKGGVTFAAKPKSYKQKVNRKMYSGAVKSILSELLRSGRMTIVEELKLETPKTREFKSVIDSLGVKDVLFVVGVEEFSENLYLSSRNLKNVAVCDSVEINPVSLVCFENVVLTKKAIKEIEEKLV</sequence>
<evidence type="ECO:0000255" key="1">
    <source>
        <dbReference type="HAMAP-Rule" id="MF_01328"/>
    </source>
</evidence>
<evidence type="ECO:0000256" key="2">
    <source>
        <dbReference type="SAM" id="MobiDB-lite"/>
    </source>
</evidence>
<evidence type="ECO:0000305" key="3"/>
<name>RL4_FRATT</name>
<dbReference type="EMBL" id="AJ749949">
    <property type="protein sequence ID" value="CAG44959.1"/>
    <property type="molecule type" value="Genomic_DNA"/>
</dbReference>
<dbReference type="RefSeq" id="WP_003021600.1">
    <property type="nucleotide sequence ID" value="NZ_CP010290.1"/>
</dbReference>
<dbReference type="RefSeq" id="YP_169375.1">
    <property type="nucleotide sequence ID" value="NC_006570.2"/>
</dbReference>
<dbReference type="SMR" id="Q5NHW7"/>
<dbReference type="STRING" id="177416.FTT_0326"/>
<dbReference type="DNASU" id="3192020"/>
<dbReference type="EnsemblBacteria" id="CAG44959">
    <property type="protein sequence ID" value="CAG44959"/>
    <property type="gene ID" value="FTT_0326"/>
</dbReference>
<dbReference type="GeneID" id="75264260"/>
<dbReference type="KEGG" id="ftu:FTT_0326"/>
<dbReference type="eggNOG" id="COG0088">
    <property type="taxonomic scope" value="Bacteria"/>
</dbReference>
<dbReference type="OrthoDB" id="9803201at2"/>
<dbReference type="Proteomes" id="UP000001174">
    <property type="component" value="Chromosome"/>
</dbReference>
<dbReference type="GO" id="GO:1990904">
    <property type="term" value="C:ribonucleoprotein complex"/>
    <property type="evidence" value="ECO:0007669"/>
    <property type="project" value="UniProtKB-KW"/>
</dbReference>
<dbReference type="GO" id="GO:0005840">
    <property type="term" value="C:ribosome"/>
    <property type="evidence" value="ECO:0007669"/>
    <property type="project" value="UniProtKB-KW"/>
</dbReference>
<dbReference type="GO" id="GO:0019843">
    <property type="term" value="F:rRNA binding"/>
    <property type="evidence" value="ECO:0007669"/>
    <property type="project" value="UniProtKB-UniRule"/>
</dbReference>
<dbReference type="GO" id="GO:0003735">
    <property type="term" value="F:structural constituent of ribosome"/>
    <property type="evidence" value="ECO:0007669"/>
    <property type="project" value="InterPro"/>
</dbReference>
<dbReference type="GO" id="GO:0006412">
    <property type="term" value="P:translation"/>
    <property type="evidence" value="ECO:0007669"/>
    <property type="project" value="UniProtKB-UniRule"/>
</dbReference>
<dbReference type="Gene3D" id="3.40.1370.10">
    <property type="match status" value="1"/>
</dbReference>
<dbReference type="HAMAP" id="MF_01328_B">
    <property type="entry name" value="Ribosomal_uL4_B"/>
    <property type="match status" value="1"/>
</dbReference>
<dbReference type="InterPro" id="IPR002136">
    <property type="entry name" value="Ribosomal_uL4"/>
</dbReference>
<dbReference type="InterPro" id="IPR013005">
    <property type="entry name" value="Ribosomal_uL4-like"/>
</dbReference>
<dbReference type="InterPro" id="IPR023574">
    <property type="entry name" value="Ribosomal_uL4_dom_sf"/>
</dbReference>
<dbReference type="NCBIfam" id="TIGR03953">
    <property type="entry name" value="rplD_bact"/>
    <property type="match status" value="1"/>
</dbReference>
<dbReference type="PANTHER" id="PTHR10746">
    <property type="entry name" value="50S RIBOSOMAL PROTEIN L4"/>
    <property type="match status" value="1"/>
</dbReference>
<dbReference type="PANTHER" id="PTHR10746:SF6">
    <property type="entry name" value="LARGE RIBOSOMAL SUBUNIT PROTEIN UL4M"/>
    <property type="match status" value="1"/>
</dbReference>
<dbReference type="Pfam" id="PF00573">
    <property type="entry name" value="Ribosomal_L4"/>
    <property type="match status" value="1"/>
</dbReference>
<dbReference type="SUPFAM" id="SSF52166">
    <property type="entry name" value="Ribosomal protein L4"/>
    <property type="match status" value="1"/>
</dbReference>
<keyword id="KW-1185">Reference proteome</keyword>
<keyword id="KW-0687">Ribonucleoprotein</keyword>
<keyword id="KW-0689">Ribosomal protein</keyword>
<keyword id="KW-0694">RNA-binding</keyword>
<keyword id="KW-0699">rRNA-binding</keyword>
<feature type="chain" id="PRO_0000242376" description="Large ribosomal subunit protein uL4">
    <location>
        <begin position="1"/>
        <end position="207"/>
    </location>
</feature>
<feature type="region of interest" description="Disordered" evidence="2">
    <location>
        <begin position="48"/>
        <end position="70"/>
    </location>
</feature>
<comment type="function">
    <text evidence="1">One of the primary rRNA binding proteins, this protein initially binds near the 5'-end of the 23S rRNA. It is important during the early stages of 50S assembly. It makes multiple contacts with different domains of the 23S rRNA in the assembled 50S subunit and ribosome.</text>
</comment>
<comment type="function">
    <text evidence="1">Forms part of the polypeptide exit tunnel.</text>
</comment>
<comment type="subunit">
    <text evidence="1">Part of the 50S ribosomal subunit.</text>
</comment>
<comment type="similarity">
    <text evidence="1">Belongs to the universal ribosomal protein uL4 family.</text>
</comment>
<accession>Q5NHW7</accession>
<organism>
    <name type="scientific">Francisella tularensis subsp. tularensis (strain SCHU S4 / Schu 4)</name>
    <dbReference type="NCBI Taxonomy" id="177416"/>
    <lineage>
        <taxon>Bacteria</taxon>
        <taxon>Pseudomonadati</taxon>
        <taxon>Pseudomonadota</taxon>
        <taxon>Gammaproteobacteria</taxon>
        <taxon>Thiotrichales</taxon>
        <taxon>Francisellaceae</taxon>
        <taxon>Francisella</taxon>
    </lineage>
</organism>
<reference key="1">
    <citation type="journal article" date="2005" name="Nat. Genet.">
        <title>The complete genome sequence of Francisella tularensis, the causative agent of tularemia.</title>
        <authorList>
            <person name="Larsson P."/>
            <person name="Oyston P.C.F."/>
            <person name="Chain P."/>
            <person name="Chu M.C."/>
            <person name="Duffield M."/>
            <person name="Fuxelius H.-H."/>
            <person name="Garcia E."/>
            <person name="Haelltorp G."/>
            <person name="Johansson D."/>
            <person name="Isherwood K.E."/>
            <person name="Karp P.D."/>
            <person name="Larsson E."/>
            <person name="Liu Y."/>
            <person name="Michell S."/>
            <person name="Prior J."/>
            <person name="Prior R."/>
            <person name="Malfatti S."/>
            <person name="Sjoestedt A."/>
            <person name="Svensson K."/>
            <person name="Thompson N."/>
            <person name="Vergez L."/>
            <person name="Wagg J.K."/>
            <person name="Wren B.W."/>
            <person name="Lindler L.E."/>
            <person name="Andersson S.G.E."/>
            <person name="Forsman M."/>
            <person name="Titball R.W."/>
        </authorList>
    </citation>
    <scope>NUCLEOTIDE SEQUENCE [LARGE SCALE GENOMIC DNA]</scope>
    <source>
        <strain>SCHU S4 / Schu 4</strain>
    </source>
</reference>
<proteinExistence type="inferred from homology"/>
<gene>
    <name evidence="1" type="primary">rplD</name>
    <name type="ordered locus">FTT_0326</name>
</gene>